<feature type="chain" id="PRO_1000212774" description="Large ribosomal subunit protein uL11">
    <location>
        <begin position="1"/>
        <end position="141"/>
    </location>
</feature>
<proteinExistence type="inferred from homology"/>
<organism>
    <name type="scientific">Exiguobacterium sp. (strain ATCC BAA-1283 / AT1b)</name>
    <dbReference type="NCBI Taxonomy" id="360911"/>
    <lineage>
        <taxon>Bacteria</taxon>
        <taxon>Bacillati</taxon>
        <taxon>Bacillota</taxon>
        <taxon>Bacilli</taxon>
        <taxon>Bacillales</taxon>
        <taxon>Bacillales Family XII. Incertae Sedis</taxon>
        <taxon>Exiguobacterium</taxon>
    </lineage>
</organism>
<gene>
    <name evidence="1" type="primary">rplK</name>
    <name type="ordered locus">EAT1b_1646</name>
</gene>
<protein>
    <recommendedName>
        <fullName evidence="1">Large ribosomal subunit protein uL11</fullName>
    </recommendedName>
    <alternativeName>
        <fullName evidence="2">50S ribosomal protein L11</fullName>
    </alternativeName>
</protein>
<name>RL11_EXISA</name>
<dbReference type="EMBL" id="CP001615">
    <property type="protein sequence ID" value="ACQ70572.1"/>
    <property type="molecule type" value="Genomic_DNA"/>
</dbReference>
<dbReference type="SMR" id="C4KZQ9"/>
<dbReference type="STRING" id="360911.EAT1b_1646"/>
<dbReference type="KEGG" id="eat:EAT1b_1646"/>
<dbReference type="eggNOG" id="COG0080">
    <property type="taxonomic scope" value="Bacteria"/>
</dbReference>
<dbReference type="HOGENOM" id="CLU_074237_2_1_9"/>
<dbReference type="OrthoDB" id="9802408at2"/>
<dbReference type="Proteomes" id="UP000000716">
    <property type="component" value="Chromosome"/>
</dbReference>
<dbReference type="GO" id="GO:0022625">
    <property type="term" value="C:cytosolic large ribosomal subunit"/>
    <property type="evidence" value="ECO:0007669"/>
    <property type="project" value="TreeGrafter"/>
</dbReference>
<dbReference type="GO" id="GO:0070180">
    <property type="term" value="F:large ribosomal subunit rRNA binding"/>
    <property type="evidence" value="ECO:0007669"/>
    <property type="project" value="UniProtKB-UniRule"/>
</dbReference>
<dbReference type="GO" id="GO:0003735">
    <property type="term" value="F:structural constituent of ribosome"/>
    <property type="evidence" value="ECO:0007669"/>
    <property type="project" value="InterPro"/>
</dbReference>
<dbReference type="GO" id="GO:0006412">
    <property type="term" value="P:translation"/>
    <property type="evidence" value="ECO:0007669"/>
    <property type="project" value="UniProtKB-UniRule"/>
</dbReference>
<dbReference type="CDD" id="cd00349">
    <property type="entry name" value="Ribosomal_L11"/>
    <property type="match status" value="1"/>
</dbReference>
<dbReference type="FunFam" id="1.10.10.250:FF:000001">
    <property type="entry name" value="50S ribosomal protein L11"/>
    <property type="match status" value="1"/>
</dbReference>
<dbReference type="FunFam" id="3.30.1550.10:FF:000001">
    <property type="entry name" value="50S ribosomal protein L11"/>
    <property type="match status" value="1"/>
</dbReference>
<dbReference type="Gene3D" id="1.10.10.250">
    <property type="entry name" value="Ribosomal protein L11, C-terminal domain"/>
    <property type="match status" value="1"/>
</dbReference>
<dbReference type="Gene3D" id="3.30.1550.10">
    <property type="entry name" value="Ribosomal protein L11/L12, N-terminal domain"/>
    <property type="match status" value="1"/>
</dbReference>
<dbReference type="HAMAP" id="MF_00736">
    <property type="entry name" value="Ribosomal_uL11"/>
    <property type="match status" value="1"/>
</dbReference>
<dbReference type="InterPro" id="IPR000911">
    <property type="entry name" value="Ribosomal_uL11"/>
</dbReference>
<dbReference type="InterPro" id="IPR006519">
    <property type="entry name" value="Ribosomal_uL11_bac-typ"/>
</dbReference>
<dbReference type="InterPro" id="IPR020783">
    <property type="entry name" value="Ribosomal_uL11_C"/>
</dbReference>
<dbReference type="InterPro" id="IPR036769">
    <property type="entry name" value="Ribosomal_uL11_C_sf"/>
</dbReference>
<dbReference type="InterPro" id="IPR020784">
    <property type="entry name" value="Ribosomal_uL11_N"/>
</dbReference>
<dbReference type="InterPro" id="IPR036796">
    <property type="entry name" value="Ribosomal_uL11_N_sf"/>
</dbReference>
<dbReference type="NCBIfam" id="TIGR01632">
    <property type="entry name" value="L11_bact"/>
    <property type="match status" value="1"/>
</dbReference>
<dbReference type="PANTHER" id="PTHR11661">
    <property type="entry name" value="60S RIBOSOMAL PROTEIN L12"/>
    <property type="match status" value="1"/>
</dbReference>
<dbReference type="PANTHER" id="PTHR11661:SF1">
    <property type="entry name" value="LARGE RIBOSOMAL SUBUNIT PROTEIN UL11M"/>
    <property type="match status" value="1"/>
</dbReference>
<dbReference type="Pfam" id="PF00298">
    <property type="entry name" value="Ribosomal_L11"/>
    <property type="match status" value="1"/>
</dbReference>
<dbReference type="Pfam" id="PF03946">
    <property type="entry name" value="Ribosomal_L11_N"/>
    <property type="match status" value="1"/>
</dbReference>
<dbReference type="SMART" id="SM00649">
    <property type="entry name" value="RL11"/>
    <property type="match status" value="1"/>
</dbReference>
<dbReference type="SUPFAM" id="SSF54747">
    <property type="entry name" value="Ribosomal L11/L12e N-terminal domain"/>
    <property type="match status" value="1"/>
</dbReference>
<dbReference type="SUPFAM" id="SSF46906">
    <property type="entry name" value="Ribosomal protein L11, C-terminal domain"/>
    <property type="match status" value="1"/>
</dbReference>
<reference key="1">
    <citation type="journal article" date="2011" name="J. Bacteriol.">
        <title>Complete genome sequence of the Thermophilic Bacterium Exiguobacterium sp. AT1b.</title>
        <authorList>
            <person name="Vishnivetskaya T.A."/>
            <person name="Lucas S."/>
            <person name="Copeland A."/>
            <person name="Lapidus A."/>
            <person name="Glavina del Rio T."/>
            <person name="Dalin E."/>
            <person name="Tice H."/>
            <person name="Bruce D.C."/>
            <person name="Goodwin L.A."/>
            <person name="Pitluck S."/>
            <person name="Saunders E."/>
            <person name="Brettin T."/>
            <person name="Detter C."/>
            <person name="Han C."/>
            <person name="Larimer F."/>
            <person name="Land M.L."/>
            <person name="Hauser L.J."/>
            <person name="Kyrpides N.C."/>
            <person name="Ovchinnikova G."/>
            <person name="Kathariou S."/>
            <person name="Ramaley R.F."/>
            <person name="Rodrigues D.F."/>
            <person name="Hendrix C."/>
            <person name="Richardson P."/>
            <person name="Tiedje J.M."/>
        </authorList>
    </citation>
    <scope>NUCLEOTIDE SEQUENCE [LARGE SCALE GENOMIC DNA]</scope>
    <source>
        <strain>ATCC BAA-1283 / AT1b</strain>
    </source>
</reference>
<comment type="function">
    <text evidence="1">Forms part of the ribosomal stalk which helps the ribosome interact with GTP-bound translation factors.</text>
</comment>
<comment type="subunit">
    <text evidence="1">Part of the ribosomal stalk of the 50S ribosomal subunit. Interacts with L10 and the large rRNA to form the base of the stalk. L10 forms an elongated spine to which L12 dimers bind in a sequential fashion forming a multimeric L10(L12)X complex.</text>
</comment>
<comment type="PTM">
    <text evidence="1">One or more lysine residues are methylated.</text>
</comment>
<comment type="similarity">
    <text evidence="1">Belongs to the universal ribosomal protein uL11 family.</text>
</comment>
<accession>C4KZQ9</accession>
<sequence>MAKKVSKLVKLQIPAGKANPAPPVGPALGQAGVNIMGFCKEFNARTQDQAGLIIPVVITVYEDRSFTFITKTPPAAVLLKKAAGIESGSGEPNRKKVATVKRDKVREIAELKMPDLNASSVETAMLMVEGTARSMGIVIED</sequence>
<keyword id="KW-0488">Methylation</keyword>
<keyword id="KW-0687">Ribonucleoprotein</keyword>
<keyword id="KW-0689">Ribosomal protein</keyword>
<keyword id="KW-0694">RNA-binding</keyword>
<keyword id="KW-0699">rRNA-binding</keyword>
<evidence type="ECO:0000255" key="1">
    <source>
        <dbReference type="HAMAP-Rule" id="MF_00736"/>
    </source>
</evidence>
<evidence type="ECO:0000305" key="2"/>